<comment type="function">
    <text evidence="1">Structural component of flagellum, the bacterial motility apparatus. Part of the rod structure of flagellar basal body (By similarity).</text>
</comment>
<comment type="subunit">
    <text evidence="1">The basal body constitutes a major portion of the flagellar organelle and consists of a number of rings mounted on a central rod. In Gram-negative bacteria, at least four rings, L, P, S and M are present, whereas Gram-positive bacteria lack the L and P rings. The rod consists of about 26 subunits of FlgG in the distal portion, and FlgB, FlgC and FlgF build up the proximal portion of the rod with about 6 subunits each. Rod assembly occurs by export via the flagellum-specific pathway of its constituent proteins and by their incorporation into the rod structure in the probable order of FlgB, FlgC, FlgF and FlgG. Another protein, FliE, also assembles onto the stable rod structure (By similarity).</text>
</comment>
<comment type="subcellular location">
    <subcellularLocation>
        <location evidence="1">Bacterial flagellum basal body</location>
    </subcellularLocation>
</comment>
<comment type="similarity">
    <text evidence="2">Belongs to the flagella basal body rod proteins family.</text>
</comment>
<proteinExistence type="inferred from homology"/>
<organism>
    <name type="scientific">Borreliella burgdorferi (strain ATCC 35210 / DSM 4680 / CIP 102532 / B31)</name>
    <name type="common">Borrelia burgdorferi</name>
    <dbReference type="NCBI Taxonomy" id="224326"/>
    <lineage>
        <taxon>Bacteria</taxon>
        <taxon>Pseudomonadati</taxon>
        <taxon>Spirochaetota</taxon>
        <taxon>Spirochaetia</taxon>
        <taxon>Spirochaetales</taxon>
        <taxon>Borreliaceae</taxon>
        <taxon>Borreliella</taxon>
    </lineage>
</organism>
<sequence length="135" mass="15710">MNDFERSVDFSHRYLDVLSLRQSVISDNIANIDTPNFKRSKISFESELEKAFLNEDKNDLNLIKSSDKHLSGFKNLKYSDVKPHRVLDHFSTMNNNGNNVDIDSEVKALVQNQMMYHLMTNVQAHYFKSINIVLK</sequence>
<accession>P52608</accession>
<accession>Q44915</accession>
<protein>
    <recommendedName>
        <fullName>Flagellar basal body rod protein FlgB</fullName>
    </recommendedName>
</protein>
<feature type="chain" id="PRO_0000180785" description="Flagellar basal body rod protein FlgB">
    <location>
        <begin position="1"/>
        <end position="135"/>
    </location>
</feature>
<feature type="sequence conflict" description="In Ref. 2; AAB51407." evidence="2" ref="2">
    <original>I</original>
    <variation>V</variation>
    <location>
        <position position="32"/>
    </location>
</feature>
<gene>
    <name type="primary">flgB</name>
    <name type="ordered locus">BB_0294</name>
</gene>
<evidence type="ECO:0000250" key="1"/>
<evidence type="ECO:0000305" key="2"/>
<dbReference type="EMBL" id="U43739">
    <property type="protein sequence ID" value="AAA85617.1"/>
    <property type="molecule type" value="Genomic_DNA"/>
</dbReference>
<dbReference type="EMBL" id="L76303">
    <property type="protein sequence ID" value="AAB51407.1"/>
    <property type="molecule type" value="Genomic_DNA"/>
</dbReference>
<dbReference type="EMBL" id="AE000783">
    <property type="protein sequence ID" value="AAC66654.1"/>
    <property type="molecule type" value="Genomic_DNA"/>
</dbReference>
<dbReference type="PIR" id="F70136">
    <property type="entry name" value="F70136"/>
</dbReference>
<dbReference type="RefSeq" id="NP_212428.1">
    <property type="nucleotide sequence ID" value="NC_001318.1"/>
</dbReference>
<dbReference type="RefSeq" id="WP_002665200.1">
    <property type="nucleotide sequence ID" value="NC_001318.1"/>
</dbReference>
<dbReference type="SMR" id="P52608"/>
<dbReference type="STRING" id="224326.BB_0294"/>
<dbReference type="PaxDb" id="224326-BB_0294"/>
<dbReference type="EnsemblBacteria" id="AAC66654">
    <property type="protein sequence ID" value="AAC66654"/>
    <property type="gene ID" value="BB_0294"/>
</dbReference>
<dbReference type="KEGG" id="bbu:BB_0294"/>
<dbReference type="PATRIC" id="fig|224326.49.peg.693"/>
<dbReference type="HOGENOM" id="CLU_125463_3_1_12"/>
<dbReference type="OrthoDB" id="9792068at2"/>
<dbReference type="Proteomes" id="UP000001807">
    <property type="component" value="Chromosome"/>
</dbReference>
<dbReference type="GO" id="GO:0030694">
    <property type="term" value="C:bacterial-type flagellum basal body, rod"/>
    <property type="evidence" value="ECO:0007669"/>
    <property type="project" value="InterPro"/>
</dbReference>
<dbReference type="GO" id="GO:0071978">
    <property type="term" value="P:bacterial-type flagellum-dependent swarming motility"/>
    <property type="evidence" value="ECO:0007669"/>
    <property type="project" value="TreeGrafter"/>
</dbReference>
<dbReference type="InterPro" id="IPR001444">
    <property type="entry name" value="Flag_bb_rod_N"/>
</dbReference>
<dbReference type="InterPro" id="IPR019776">
    <property type="entry name" value="Flagellar_basal_body_rod_CS"/>
</dbReference>
<dbReference type="InterPro" id="IPR006300">
    <property type="entry name" value="FlgB"/>
</dbReference>
<dbReference type="NCBIfam" id="TIGR01396">
    <property type="entry name" value="FlgB"/>
    <property type="match status" value="1"/>
</dbReference>
<dbReference type="NCBIfam" id="NF009265">
    <property type="entry name" value="PRK12622.1"/>
    <property type="match status" value="1"/>
</dbReference>
<dbReference type="PANTHER" id="PTHR30435:SF12">
    <property type="entry name" value="FLAGELLAR BASAL BODY ROD PROTEIN FLGB"/>
    <property type="match status" value="1"/>
</dbReference>
<dbReference type="PANTHER" id="PTHR30435">
    <property type="entry name" value="FLAGELLAR PROTEIN"/>
    <property type="match status" value="1"/>
</dbReference>
<dbReference type="Pfam" id="PF00460">
    <property type="entry name" value="Flg_bb_rod"/>
    <property type="match status" value="1"/>
</dbReference>
<dbReference type="PIRSF" id="PIRSF002889">
    <property type="entry name" value="Rod_FlgB"/>
    <property type="match status" value="1"/>
</dbReference>
<dbReference type="PROSITE" id="PS00588">
    <property type="entry name" value="FLAGELLA_BB_ROD"/>
    <property type="match status" value="1"/>
</dbReference>
<reference key="1">
    <citation type="submission" date="1995-12" db="EMBL/GenBank/DDBJ databases">
        <authorList>
            <person name="Dunn J.J."/>
            <person name="Butler-Loffredo L."/>
            <person name="Kieleczawa J."/>
            <person name="Medalle J."/>
            <person name="Luft B.J."/>
        </authorList>
    </citation>
    <scope>NUCLEOTIDE SEQUENCE [GENOMIC DNA]</scope>
    <source>
        <strain>ATCC 35210 / DSM 4680 / CIP 102532 / B31</strain>
    </source>
</reference>
<reference key="2">
    <citation type="journal article" date="1997" name="J. Bacteriol.">
        <title>Molecular characterization of a large Borrelia burgdorferi motility operon which is initiated by a consensus sigma70 promoter.</title>
        <authorList>
            <person name="Ge Y."/>
            <person name="Old I.G."/>
            <person name="Saint Girons I."/>
            <person name="Charon N.W."/>
        </authorList>
    </citation>
    <scope>NUCLEOTIDE SEQUENCE [GENOMIC DNA]</scope>
    <source>
        <strain>212</strain>
    </source>
</reference>
<reference key="3">
    <citation type="journal article" date="1997" name="Nature">
        <title>Genomic sequence of a Lyme disease spirochaete, Borrelia burgdorferi.</title>
        <authorList>
            <person name="Fraser C.M."/>
            <person name="Casjens S."/>
            <person name="Huang W.M."/>
            <person name="Sutton G.G."/>
            <person name="Clayton R.A."/>
            <person name="Lathigra R."/>
            <person name="White O."/>
            <person name="Ketchum K.A."/>
            <person name="Dodson R.J."/>
            <person name="Hickey E.K."/>
            <person name="Gwinn M.L."/>
            <person name="Dougherty B.A."/>
            <person name="Tomb J.-F."/>
            <person name="Fleischmann R.D."/>
            <person name="Richardson D.L."/>
            <person name="Peterson J.D."/>
            <person name="Kerlavage A.R."/>
            <person name="Quackenbush J."/>
            <person name="Salzberg S.L."/>
            <person name="Hanson M."/>
            <person name="van Vugt R."/>
            <person name="Palmer N."/>
            <person name="Adams M.D."/>
            <person name="Gocayne J.D."/>
            <person name="Weidman J.F."/>
            <person name="Utterback T.R."/>
            <person name="Watthey L."/>
            <person name="McDonald L.A."/>
            <person name="Artiach P."/>
            <person name="Bowman C."/>
            <person name="Garland S.A."/>
            <person name="Fujii C."/>
            <person name="Cotton M.D."/>
            <person name="Horst K."/>
            <person name="Roberts K.M."/>
            <person name="Hatch B."/>
            <person name="Smith H.O."/>
            <person name="Venter J.C."/>
        </authorList>
    </citation>
    <scope>NUCLEOTIDE SEQUENCE [LARGE SCALE GENOMIC DNA]</scope>
    <source>
        <strain>ATCC 35210 / DSM 4680 / CIP 102532 / B31</strain>
    </source>
</reference>
<keyword id="KW-0975">Bacterial flagellum</keyword>
<keyword id="KW-1185">Reference proteome</keyword>
<name>FLGB_BORBU</name>